<reference key="1">
    <citation type="submission" date="2007-10" db="EMBL/GenBank/DDBJ databases">
        <title>Genome sequence of Campylobacter concisus 13826 isolated from human feces.</title>
        <authorList>
            <person name="Fouts D.E."/>
            <person name="Mongodin E.F."/>
            <person name="Puiu D."/>
            <person name="Sebastian Y."/>
            <person name="Miller W.G."/>
            <person name="Mandrell R.E."/>
            <person name="On S."/>
            <person name="Nelson K.E."/>
        </authorList>
    </citation>
    <scope>NUCLEOTIDE SEQUENCE [LARGE SCALE GENOMIC DNA]</scope>
    <source>
        <strain>13826</strain>
    </source>
</reference>
<name>PYRH_CAMC1</name>
<sequence length="238" mass="25736">MSKRKRVLVKFSGEALAGENGFGIDTAVLKFIASEIKELIENDIEVGIVIGGGNIVRGVSAAKDGIIKRTSGDHMGMLATVINSIAMREALERSGLEVRVQSAIKMEAICETFIVGRAQRHLEKGRVVIFAAGTGNPFFTTDTAATLRAIEIGSDMIIKATKVDGVYDKDPKKFKDAKLLKSLNYEKAMSDDIKVMDDTAIALAKDNALPILVCNMFKAGNLLKIINEEEAALYSVVK</sequence>
<organism>
    <name type="scientific">Campylobacter concisus (strain 13826)</name>
    <dbReference type="NCBI Taxonomy" id="360104"/>
    <lineage>
        <taxon>Bacteria</taxon>
        <taxon>Pseudomonadati</taxon>
        <taxon>Campylobacterota</taxon>
        <taxon>Epsilonproteobacteria</taxon>
        <taxon>Campylobacterales</taxon>
        <taxon>Campylobacteraceae</taxon>
        <taxon>Campylobacter</taxon>
    </lineage>
</organism>
<dbReference type="EC" id="2.7.4.22" evidence="1"/>
<dbReference type="EMBL" id="CP000792">
    <property type="protein sequence ID" value="EAT99363.1"/>
    <property type="molecule type" value="Genomic_DNA"/>
</dbReference>
<dbReference type="RefSeq" id="WP_009294284.1">
    <property type="nucleotide sequence ID" value="NC_009802.2"/>
</dbReference>
<dbReference type="SMR" id="A7ZEY4"/>
<dbReference type="STRING" id="360104.CCC13826_0502"/>
<dbReference type="KEGG" id="cco:CCC13826_0502"/>
<dbReference type="eggNOG" id="COG0528">
    <property type="taxonomic scope" value="Bacteria"/>
</dbReference>
<dbReference type="HOGENOM" id="CLU_033861_0_0_7"/>
<dbReference type="OrthoDB" id="9807458at2"/>
<dbReference type="UniPathway" id="UPA00159">
    <property type="reaction ID" value="UER00275"/>
</dbReference>
<dbReference type="Proteomes" id="UP000001121">
    <property type="component" value="Chromosome"/>
</dbReference>
<dbReference type="GO" id="GO:0005829">
    <property type="term" value="C:cytosol"/>
    <property type="evidence" value="ECO:0007669"/>
    <property type="project" value="TreeGrafter"/>
</dbReference>
<dbReference type="GO" id="GO:0005524">
    <property type="term" value="F:ATP binding"/>
    <property type="evidence" value="ECO:0007669"/>
    <property type="project" value="UniProtKB-KW"/>
</dbReference>
<dbReference type="GO" id="GO:0033862">
    <property type="term" value="F:UMP kinase activity"/>
    <property type="evidence" value="ECO:0007669"/>
    <property type="project" value="UniProtKB-EC"/>
</dbReference>
<dbReference type="GO" id="GO:0044210">
    <property type="term" value="P:'de novo' CTP biosynthetic process"/>
    <property type="evidence" value="ECO:0007669"/>
    <property type="project" value="UniProtKB-UniRule"/>
</dbReference>
<dbReference type="GO" id="GO:0006225">
    <property type="term" value="P:UDP biosynthetic process"/>
    <property type="evidence" value="ECO:0007669"/>
    <property type="project" value="TreeGrafter"/>
</dbReference>
<dbReference type="CDD" id="cd04254">
    <property type="entry name" value="AAK_UMPK-PyrH-Ec"/>
    <property type="match status" value="1"/>
</dbReference>
<dbReference type="FunFam" id="3.40.1160.10:FF:000001">
    <property type="entry name" value="Uridylate kinase"/>
    <property type="match status" value="1"/>
</dbReference>
<dbReference type="Gene3D" id="3.40.1160.10">
    <property type="entry name" value="Acetylglutamate kinase-like"/>
    <property type="match status" value="1"/>
</dbReference>
<dbReference type="HAMAP" id="MF_01220_B">
    <property type="entry name" value="PyrH_B"/>
    <property type="match status" value="1"/>
</dbReference>
<dbReference type="InterPro" id="IPR036393">
    <property type="entry name" value="AceGlu_kinase-like_sf"/>
</dbReference>
<dbReference type="InterPro" id="IPR001048">
    <property type="entry name" value="Asp/Glu/Uridylate_kinase"/>
</dbReference>
<dbReference type="InterPro" id="IPR011817">
    <property type="entry name" value="Uridylate_kinase"/>
</dbReference>
<dbReference type="InterPro" id="IPR015963">
    <property type="entry name" value="Uridylate_kinase_bac"/>
</dbReference>
<dbReference type="NCBIfam" id="TIGR02075">
    <property type="entry name" value="pyrH_bact"/>
    <property type="match status" value="1"/>
</dbReference>
<dbReference type="PANTHER" id="PTHR42833">
    <property type="entry name" value="URIDYLATE KINASE"/>
    <property type="match status" value="1"/>
</dbReference>
<dbReference type="PANTHER" id="PTHR42833:SF4">
    <property type="entry name" value="URIDYLATE KINASE PUMPKIN, CHLOROPLASTIC"/>
    <property type="match status" value="1"/>
</dbReference>
<dbReference type="Pfam" id="PF00696">
    <property type="entry name" value="AA_kinase"/>
    <property type="match status" value="1"/>
</dbReference>
<dbReference type="PIRSF" id="PIRSF005650">
    <property type="entry name" value="Uridylate_kin"/>
    <property type="match status" value="1"/>
</dbReference>
<dbReference type="SUPFAM" id="SSF53633">
    <property type="entry name" value="Carbamate kinase-like"/>
    <property type="match status" value="1"/>
</dbReference>
<comment type="function">
    <text evidence="1">Catalyzes the reversible phosphorylation of UMP to UDP.</text>
</comment>
<comment type="catalytic activity">
    <reaction evidence="1">
        <text>UMP + ATP = UDP + ADP</text>
        <dbReference type="Rhea" id="RHEA:24400"/>
        <dbReference type="ChEBI" id="CHEBI:30616"/>
        <dbReference type="ChEBI" id="CHEBI:57865"/>
        <dbReference type="ChEBI" id="CHEBI:58223"/>
        <dbReference type="ChEBI" id="CHEBI:456216"/>
        <dbReference type="EC" id="2.7.4.22"/>
    </reaction>
</comment>
<comment type="activity regulation">
    <text evidence="1">Allosterically activated by GTP. Inhibited by UTP.</text>
</comment>
<comment type="pathway">
    <text evidence="1">Pyrimidine metabolism; CTP biosynthesis via de novo pathway; UDP from UMP (UMPK route): step 1/1.</text>
</comment>
<comment type="subunit">
    <text evidence="1">Homohexamer.</text>
</comment>
<comment type="subcellular location">
    <subcellularLocation>
        <location evidence="1">Cytoplasm</location>
    </subcellularLocation>
</comment>
<comment type="similarity">
    <text evidence="1">Belongs to the UMP kinase family.</text>
</comment>
<accession>A7ZEY4</accession>
<proteinExistence type="inferred from homology"/>
<protein>
    <recommendedName>
        <fullName evidence="1">Uridylate kinase</fullName>
        <shortName evidence="1">UK</shortName>
        <ecNumber evidence="1">2.7.4.22</ecNumber>
    </recommendedName>
    <alternativeName>
        <fullName evidence="1">Uridine monophosphate kinase</fullName>
        <shortName evidence="1">UMP kinase</shortName>
        <shortName evidence="1">UMPK</shortName>
    </alternativeName>
</protein>
<gene>
    <name evidence="1" type="primary">pyrH</name>
    <name type="ordered locus">Ccon26_14950</name>
    <name type="ORF">CCC13826_0502</name>
</gene>
<evidence type="ECO:0000255" key="1">
    <source>
        <dbReference type="HAMAP-Rule" id="MF_01220"/>
    </source>
</evidence>
<keyword id="KW-0021">Allosteric enzyme</keyword>
<keyword id="KW-0067">ATP-binding</keyword>
<keyword id="KW-0963">Cytoplasm</keyword>
<keyword id="KW-0418">Kinase</keyword>
<keyword id="KW-0547">Nucleotide-binding</keyword>
<keyword id="KW-0665">Pyrimidine biosynthesis</keyword>
<keyword id="KW-0808">Transferase</keyword>
<feature type="chain" id="PRO_1000053898" description="Uridylate kinase">
    <location>
        <begin position="1"/>
        <end position="238"/>
    </location>
</feature>
<feature type="region of interest" description="Involved in allosteric activation by GTP" evidence="1">
    <location>
        <begin position="18"/>
        <end position="23"/>
    </location>
</feature>
<feature type="binding site" evidence="1">
    <location>
        <begin position="10"/>
        <end position="13"/>
    </location>
    <ligand>
        <name>ATP</name>
        <dbReference type="ChEBI" id="CHEBI:30616"/>
    </ligand>
</feature>
<feature type="binding site" evidence="1">
    <location>
        <position position="52"/>
    </location>
    <ligand>
        <name>UMP</name>
        <dbReference type="ChEBI" id="CHEBI:57865"/>
    </ligand>
</feature>
<feature type="binding site" evidence="1">
    <location>
        <position position="53"/>
    </location>
    <ligand>
        <name>ATP</name>
        <dbReference type="ChEBI" id="CHEBI:30616"/>
    </ligand>
</feature>
<feature type="binding site" evidence="1">
    <location>
        <position position="57"/>
    </location>
    <ligand>
        <name>ATP</name>
        <dbReference type="ChEBI" id="CHEBI:30616"/>
    </ligand>
</feature>
<feature type="binding site" evidence="1">
    <location>
        <position position="73"/>
    </location>
    <ligand>
        <name>UMP</name>
        <dbReference type="ChEBI" id="CHEBI:57865"/>
    </ligand>
</feature>
<feature type="binding site" evidence="1">
    <location>
        <begin position="134"/>
        <end position="141"/>
    </location>
    <ligand>
        <name>UMP</name>
        <dbReference type="ChEBI" id="CHEBI:57865"/>
    </ligand>
</feature>
<feature type="binding site" evidence="1">
    <location>
        <position position="161"/>
    </location>
    <ligand>
        <name>ATP</name>
        <dbReference type="ChEBI" id="CHEBI:30616"/>
    </ligand>
</feature>
<feature type="binding site" evidence="1">
    <location>
        <position position="167"/>
    </location>
    <ligand>
        <name>ATP</name>
        <dbReference type="ChEBI" id="CHEBI:30616"/>
    </ligand>
</feature>
<feature type="binding site" evidence="1">
    <location>
        <position position="170"/>
    </location>
    <ligand>
        <name>ATP</name>
        <dbReference type="ChEBI" id="CHEBI:30616"/>
    </ligand>
</feature>